<evidence type="ECO:0000250" key="1"/>
<evidence type="ECO:0000255" key="2"/>
<evidence type="ECO:0000305" key="3"/>
<keyword id="KW-0165">Cleavage on pair of basic residues</keyword>
<keyword id="KW-1015">Disulfide bond</keyword>
<keyword id="KW-0960">Knottin</keyword>
<keyword id="KW-0528">Neurotoxin</keyword>
<keyword id="KW-0964">Secreted</keyword>
<keyword id="KW-0732">Signal</keyword>
<keyword id="KW-0800">Toxin</keyword>
<name>O268_CONPE</name>
<sequence>MQKLIILLLVAAVLMSTQALFQEKRLKEKINFLSKEKADAEKQQKRYCSDQWKSCSYPHECCRWSCNRYCA</sequence>
<organism>
    <name type="scientific">Conus pennaceus</name>
    <name type="common">Feathered cone</name>
    <name type="synonym">Conus episcopus</name>
    <dbReference type="NCBI Taxonomy" id="37335"/>
    <lineage>
        <taxon>Eukaryota</taxon>
        <taxon>Metazoa</taxon>
        <taxon>Spiralia</taxon>
        <taxon>Lophotrochozoa</taxon>
        <taxon>Mollusca</taxon>
        <taxon>Gastropoda</taxon>
        <taxon>Caenogastropoda</taxon>
        <taxon>Neogastropoda</taxon>
        <taxon>Conoidea</taxon>
        <taxon>Conidae</taxon>
        <taxon>Conus</taxon>
        <taxon>Darioconus</taxon>
    </lineage>
</organism>
<feature type="signal peptide" evidence="2">
    <location>
        <begin position="1"/>
        <end position="19"/>
    </location>
</feature>
<feature type="propeptide" id="PRO_0000404826" evidence="1">
    <location>
        <begin position="20"/>
        <end position="46"/>
    </location>
</feature>
<feature type="peptide" id="PRO_0000404827" description="Conotoxin PnMEKL-032">
    <location>
        <begin position="47"/>
        <end position="71"/>
    </location>
</feature>
<feature type="disulfide bond" evidence="1">
    <location>
        <begin position="48"/>
        <end position="62"/>
    </location>
</feature>
<feature type="disulfide bond" evidence="1">
    <location>
        <begin position="55"/>
        <end position="66"/>
    </location>
</feature>
<feature type="disulfide bond" evidence="1">
    <location>
        <begin position="61"/>
        <end position="70"/>
    </location>
</feature>
<comment type="subcellular location">
    <subcellularLocation>
        <location evidence="1">Secreted</location>
    </subcellularLocation>
</comment>
<comment type="tissue specificity">
    <text>Expressed by the venom duct.</text>
</comment>
<comment type="domain">
    <text evidence="1">The presence of a 'disulfide through disulfide knot' structurally defines this protein as a knottin.</text>
</comment>
<comment type="domain">
    <text>The cysteine framework is VI/VII (C-C-CC-C-C).</text>
</comment>
<comment type="similarity">
    <text evidence="3">Belongs to the conotoxin O2 superfamily.</text>
</comment>
<proteinExistence type="evidence at transcript level"/>
<accession>Q9BPA7</accession>
<reference key="1">
    <citation type="journal article" date="2001" name="Mol. Biol. Evol.">
        <title>Mechanisms for evolving hypervariability: the case of conopeptides.</title>
        <authorList>
            <person name="Conticello S.G."/>
            <person name="Gilad Y."/>
            <person name="Avidan N."/>
            <person name="Ben-Asher E."/>
            <person name="Levy Z."/>
            <person name="Fainzilber M."/>
        </authorList>
    </citation>
    <scope>NUCLEOTIDE SEQUENCE [MRNA]</scope>
    <source>
        <tissue>Venom duct</tissue>
    </source>
</reference>
<dbReference type="EMBL" id="AF215030">
    <property type="protein sequence ID" value="AAG60458.1"/>
    <property type="molecule type" value="mRNA"/>
</dbReference>
<dbReference type="ConoServer" id="717">
    <property type="toxin name" value="Pn6.8 precursor"/>
</dbReference>
<dbReference type="GO" id="GO:0005576">
    <property type="term" value="C:extracellular region"/>
    <property type="evidence" value="ECO:0007669"/>
    <property type="project" value="UniProtKB-SubCell"/>
</dbReference>
<dbReference type="GO" id="GO:0008200">
    <property type="term" value="F:ion channel inhibitor activity"/>
    <property type="evidence" value="ECO:0007669"/>
    <property type="project" value="InterPro"/>
</dbReference>
<dbReference type="GO" id="GO:0090729">
    <property type="term" value="F:toxin activity"/>
    <property type="evidence" value="ECO:0007669"/>
    <property type="project" value="UniProtKB-KW"/>
</dbReference>
<dbReference type="InterPro" id="IPR004214">
    <property type="entry name" value="Conotoxin"/>
</dbReference>
<dbReference type="Pfam" id="PF02950">
    <property type="entry name" value="Conotoxin"/>
    <property type="match status" value="1"/>
</dbReference>
<protein>
    <recommendedName>
        <fullName>Conotoxin PnMEKL-032</fullName>
    </recommendedName>
</protein>